<reference key="1">
    <citation type="journal article" date="2021" name="Angew. Chem. Int. Ed.">
        <title>Biosynthetic studies of phomopsins unveil posttranslational installation of dehydroamino acids by ustYa family proteins.</title>
        <authorList>
            <person name="Sogahata K."/>
            <person name="Ozaki T."/>
            <person name="Igarashi Y."/>
            <person name="Naganuma Y."/>
            <person name="Liu C."/>
            <person name="Minami A."/>
            <person name="Oikawa H."/>
        </authorList>
    </citation>
    <scope>NUCLEOTIDE SEQUENCE [GENOMIC DNA]</scope>
    <scope>FUNCTION</scope>
    <source>
        <strain>ATCC 26115 / IMI 115107 / C 1557</strain>
    </source>
</reference>
<evidence type="ECO:0000255" key="1"/>
<evidence type="ECO:0000255" key="2">
    <source>
        <dbReference type="PROSITE-ProRule" id="PRU00498"/>
    </source>
</evidence>
<evidence type="ECO:0000269" key="3">
    <source>
    </source>
</evidence>
<evidence type="ECO:0000303" key="4">
    <source>
    </source>
</evidence>
<evidence type="ECO:0000305" key="5"/>
<evidence type="ECO:0000305" key="6">
    <source>
    </source>
</evidence>
<keyword id="KW-0325">Glycoprotein</keyword>
<keyword id="KW-0378">Hydrolase</keyword>
<keyword id="KW-0645">Protease</keyword>
<keyword id="KW-0720">Serine protease</keyword>
<keyword id="KW-0732">Signal</keyword>
<keyword id="KW-0843">Virulence</keyword>
<comment type="function">
    <text evidence="3 6">Peptidase S41 family protein; part of the gene cluster that mediates the biosynthesis of the phomopsins, a group of hexapeptide mycotoxins which infects lupins and causes lupinosis disease in livestock (PubMed:34608734). Within the pathway, phomP1 and phomP1' are probably involved in the processing of the phomA and phomA' precursors (Probable). The pathway starts with the processing of the precursor phomA by several endopeptidases including kexin proteases as well as the cluster-specific S41 family peptidase phomP1 and the oligopeptidase phomG to produce 10 identical copies of the hexapeptide Tyr-Val-Ile-Pro-Ile-Asp. After being excised from the precursor peptide, the core peptides are cyclized and modified post-translationally by enzymes encoded within the gene cluster. The timing and order of proteolysis of the phomA precursor and PTMs are still unknown. Two tyrosinase-like enzymes, phomQ1 and phomQ2, catalyze the chlorination and hydroxylation of Tyr, respectively. PhomYb, is proposed to be involved in the construction of the macrocyclic structure. The other 4 ustYa family proteins may be involved in PTMs that generate the unique structure of phomopsin A. PhomYa is required for the hydroxylation of C-beta of Tyr. PhomYc, phomYd, and phomYe are responsible for the biosynthesis of 2,3-dehydroisoleucine (dIle), 2,3-dehydroaspartic acid (dAsp), and 3,4-dehydroproline (dPro), respectively. While dIle formation by phomYc is indispensable for the installation of dAsp by phomYd, the order of the other PTMs have not been elucidated yet. Most of the biosynthetic enzymes likely have broad substrate specificity, and thus, there might be a metabolic grid from a precursor to phomopsin A. The enzyme(s) responsible for the biosynthesis of 3,4-dehydrovaline (dVal) have also not been identified yet. Finally, phomM acts as an S-adenosylmethionine-dependent alpha-N-methyltransferase that catalyzes two successive N-methylation reactions, converting N-desmethyl-phomopsin A to phomopsin A and phomopsin A further to an N,N-dimethylated congener called phomopsin E (Probable).</text>
</comment>
<comment type="pathway">
    <text evidence="6">Mycotoxin biosynthesis.</text>
</comment>
<comment type="similarity">
    <text evidence="5">Belongs to the peptidase S41A family.</text>
</comment>
<dbReference type="EC" id="3.4.-.-" evidence="6"/>
<dbReference type="EMBL" id="LC646903">
    <property type="protein sequence ID" value="BDA39140.1"/>
    <property type="molecule type" value="Genomic_DNA"/>
</dbReference>
<dbReference type="GO" id="GO:0008236">
    <property type="term" value="F:serine-type peptidase activity"/>
    <property type="evidence" value="ECO:0007669"/>
    <property type="project" value="UniProtKB-KW"/>
</dbReference>
<dbReference type="GO" id="GO:0006508">
    <property type="term" value="P:proteolysis"/>
    <property type="evidence" value="ECO:0007669"/>
    <property type="project" value="UniProtKB-KW"/>
</dbReference>
<dbReference type="Gene3D" id="3.90.226.10">
    <property type="entry name" value="2-enoyl-CoA Hydratase, Chain A, domain 1"/>
    <property type="match status" value="1"/>
</dbReference>
<dbReference type="InterPro" id="IPR029045">
    <property type="entry name" value="ClpP/crotonase-like_dom_sf"/>
</dbReference>
<dbReference type="InterPro" id="IPR056186">
    <property type="entry name" value="PDZ_CPAF-rel"/>
</dbReference>
<dbReference type="InterPro" id="IPR052766">
    <property type="entry name" value="S41A_metabolite_peptidase"/>
</dbReference>
<dbReference type="InterPro" id="IPR005151">
    <property type="entry name" value="Tail-specific_protease"/>
</dbReference>
<dbReference type="PANTHER" id="PTHR37049">
    <property type="entry name" value="PEPTIDASE S41 FAMILY PROTEIN"/>
    <property type="match status" value="1"/>
</dbReference>
<dbReference type="PANTHER" id="PTHR37049:SF4">
    <property type="entry name" value="RHODANESE DOMAIN-CONTAINING PROTEIN"/>
    <property type="match status" value="1"/>
</dbReference>
<dbReference type="Pfam" id="PF23658">
    <property type="entry name" value="PDZ_CPAF_rel"/>
    <property type="match status" value="1"/>
</dbReference>
<dbReference type="Pfam" id="PF03572">
    <property type="entry name" value="Peptidase_S41"/>
    <property type="match status" value="1"/>
</dbReference>
<dbReference type="SUPFAM" id="SSF52096">
    <property type="entry name" value="ClpP/crotonase"/>
    <property type="match status" value="1"/>
</dbReference>
<organism>
    <name type="scientific">Diaporthe leptostromiformis</name>
    <name type="common">Lupinosis disease fungus</name>
    <name type="synonym">Phomopsis leptostromiformis</name>
    <dbReference type="NCBI Taxonomy" id="291059"/>
    <lineage>
        <taxon>Eukaryota</taxon>
        <taxon>Fungi</taxon>
        <taxon>Dikarya</taxon>
        <taxon>Ascomycota</taxon>
        <taxon>Pezizomycotina</taxon>
        <taxon>Sordariomycetes</taxon>
        <taxon>Sordariomycetidae</taxon>
        <taxon>Diaporthales</taxon>
        <taxon>Diaporthaceae</taxon>
        <taxon>Diaporthe</taxon>
    </lineage>
</organism>
<accession>A0A8J9S8U9</accession>
<sequence length="666" mass="72643">MSSFLVQTAVVRLFLLGVVFWFPFALSSSCAEIASKFGTWKSEGDAPPSYLSPTVDLLDGLDRIRKKIINGTISSQYDFDNLLHRLISQANDGHLQIGLCSREIFRFQHGTPLTSVSREGLDLPQLYVHSDAVIMHSGQVEAISPVVEINGLEADYYLQSRIAVTLGYQDPDARYNALFPSPSAGFTGTYSAGAWASNSGEWPGSAVLTIRFANGTRLEVKPTATWPATNGPMNYTDGQALFEAACLPGTSSKYIFGSFPGMYLGLPAYELPRSGPSVFPAPTIKDSNGLVRLYSLEDAALQDVAVLQITSFRIGGEDSREFSATIRQSLDWASSHGKTKLLLDLSGNEGGNVIPGFDLFRMLFPDEPIRSETRFRSTELLDVLGQAFSAEYRGADAKEILDPPLAAQNAVSPDQEENVFGSWKDLFGPDPNYEGDSMSNAYAVFSFAAASTTFEPISGYGSAPLAIKTRLFEPQSIAVVTDGRCASTCAIVVGLLQAQGVRTVTFGGRPRKAPMQAVGGVKGGQRWSLRTISRHIKTARELLAKQYTSTAAQANSTRRLAVGHLLQKLNDLAPPALPLIPRMEDNEWEFALRFDTYGQSSVNFRDAYVPANETTPWQFIYEAADCRMFLTPENVVDPASRWNSAARAMFGGREMGSEKCVDYVSV</sequence>
<gene>
    <name evidence="4" type="primary">phomP1</name>
</gene>
<proteinExistence type="inferred from homology"/>
<name>PHP11_DIALO</name>
<feature type="signal peptide" evidence="1">
    <location>
        <begin position="1"/>
        <end position="27"/>
    </location>
</feature>
<feature type="chain" id="PRO_0000458388" description="Peptidase S41 family protein phomP1" evidence="1">
    <location>
        <begin position="28"/>
        <end position="666"/>
    </location>
</feature>
<feature type="region of interest" description="Peptidase S41 domain" evidence="1">
    <location>
        <begin position="303"/>
        <end position="504"/>
    </location>
</feature>
<feature type="glycosylation site" description="N-linked (GlcNAc...) asparagine" evidence="2">
    <location>
        <position position="70"/>
    </location>
</feature>
<feature type="glycosylation site" description="N-linked (GlcNAc...) asparagine" evidence="2">
    <location>
        <position position="214"/>
    </location>
</feature>
<feature type="glycosylation site" description="N-linked (GlcNAc...) asparagine" evidence="2">
    <location>
        <position position="234"/>
    </location>
</feature>
<feature type="glycosylation site" description="N-linked (GlcNAc...) asparagine" evidence="2">
    <location>
        <position position="555"/>
    </location>
</feature>
<feature type="glycosylation site" description="N-linked (GlcNAc...) asparagine" evidence="2">
    <location>
        <position position="612"/>
    </location>
</feature>
<protein>
    <recommendedName>
        <fullName evidence="4">Peptidase S41 family protein phomP1</fullName>
        <ecNumber evidence="6">3.4.-.-</ecNumber>
    </recommendedName>
    <alternativeName>
        <fullName evidence="4">Phomopsin biosynthesis cluster protein P1</fullName>
    </alternativeName>
</protein>